<evidence type="ECO:0000250" key="1">
    <source>
        <dbReference type="UniProtKB" id="Q96KA5"/>
    </source>
</evidence>
<evidence type="ECO:0000255" key="2"/>
<evidence type="ECO:0000305" key="3"/>
<feature type="chain" id="PRO_0000331302" description="Lipid scramblase CLPTM1L">
    <location>
        <begin position="1"/>
        <end position="538"/>
    </location>
</feature>
<feature type="topological domain" description="Cytoplasmic" evidence="2">
    <location>
        <begin position="1"/>
        <end position="10"/>
    </location>
</feature>
<feature type="transmembrane region" description="Helical" evidence="2">
    <location>
        <begin position="11"/>
        <end position="31"/>
    </location>
</feature>
<feature type="topological domain" description="Extracellular" evidence="2">
    <location>
        <begin position="32"/>
        <end position="284"/>
    </location>
</feature>
<feature type="transmembrane region" description="Helical" evidence="2">
    <location>
        <begin position="285"/>
        <end position="305"/>
    </location>
</feature>
<feature type="topological domain" description="Cytoplasmic" evidence="2">
    <location>
        <begin position="306"/>
        <end position="324"/>
    </location>
</feature>
<feature type="transmembrane region" description="Helical" evidence="2">
    <location>
        <begin position="325"/>
        <end position="342"/>
    </location>
</feature>
<feature type="topological domain" description="Extracellular" evidence="2">
    <location>
        <begin position="343"/>
        <end position="346"/>
    </location>
</feature>
<feature type="transmembrane region" description="Helical" evidence="2">
    <location>
        <begin position="347"/>
        <end position="364"/>
    </location>
</feature>
<feature type="topological domain" description="Cytoplasmic" evidence="2">
    <location>
        <begin position="365"/>
        <end position="402"/>
    </location>
</feature>
<feature type="transmembrane region" description="Helical" evidence="2">
    <location>
        <begin position="403"/>
        <end position="423"/>
    </location>
</feature>
<feature type="topological domain" description="Extracellular" evidence="2">
    <location>
        <begin position="424"/>
        <end position="428"/>
    </location>
</feature>
<feature type="transmembrane region" description="Helical" evidence="2">
    <location>
        <begin position="429"/>
        <end position="449"/>
    </location>
</feature>
<feature type="topological domain" description="Cytoplasmic" evidence="2">
    <location>
        <begin position="450"/>
        <end position="538"/>
    </location>
</feature>
<feature type="glycosylation site" description="N-linked (GlcNAc...) asparagine" evidence="2">
    <location>
        <position position="91"/>
    </location>
</feature>
<feature type="glycosylation site" description="N-linked (GlcNAc...) asparagine" evidence="2">
    <location>
        <position position="101"/>
    </location>
</feature>
<gene>
    <name type="primary">CLPTM1L</name>
</gene>
<protein>
    <recommendedName>
        <fullName evidence="3">Lipid scramblase CLPTM1L</fullName>
    </recommendedName>
    <alternativeName>
        <fullName evidence="1">Cisplatin resistance-related protein 9</fullName>
        <shortName>CRR9p</shortName>
    </alternativeName>
    <alternativeName>
        <fullName>Cleft lip and palate transmembrane protein 1-like protein</fullName>
        <shortName>CLPTM1-like protein</shortName>
    </alternativeName>
</protein>
<dbReference type="EMBL" id="CR860207">
    <property type="protein sequence ID" value="CAH92349.1"/>
    <property type="molecule type" value="mRNA"/>
</dbReference>
<dbReference type="RefSeq" id="NP_001126382.1">
    <property type="nucleotide sequence ID" value="NM_001132910.2"/>
</dbReference>
<dbReference type="FunCoup" id="Q5R7B1">
    <property type="interactions" value="1948"/>
</dbReference>
<dbReference type="STRING" id="9601.ENSPPYP00000017110"/>
<dbReference type="GlyCosmos" id="Q5R7B1">
    <property type="glycosylation" value="2 sites, No reported glycans"/>
</dbReference>
<dbReference type="GeneID" id="100173363"/>
<dbReference type="KEGG" id="pon:100173363"/>
<dbReference type="CTD" id="81037"/>
<dbReference type="eggNOG" id="KOG2489">
    <property type="taxonomic scope" value="Eukaryota"/>
</dbReference>
<dbReference type="InParanoid" id="Q5R7B1"/>
<dbReference type="OrthoDB" id="378564at2759"/>
<dbReference type="Proteomes" id="UP000001595">
    <property type="component" value="Unplaced"/>
</dbReference>
<dbReference type="GO" id="GO:0005789">
    <property type="term" value="C:endoplasmic reticulum membrane"/>
    <property type="evidence" value="ECO:0000250"/>
    <property type="project" value="UniProtKB"/>
</dbReference>
<dbReference type="GO" id="GO:0017128">
    <property type="term" value="F:phospholipid scramblase activity"/>
    <property type="evidence" value="ECO:0000250"/>
    <property type="project" value="UniProtKB"/>
</dbReference>
<dbReference type="GO" id="GO:0006915">
    <property type="term" value="P:apoptotic process"/>
    <property type="evidence" value="ECO:0007669"/>
    <property type="project" value="UniProtKB-KW"/>
</dbReference>
<dbReference type="InterPro" id="IPR008429">
    <property type="entry name" value="CLPTM1"/>
</dbReference>
<dbReference type="PANTHER" id="PTHR21347">
    <property type="entry name" value="CLEFT LIP AND PALATE ASSOCIATED TRANSMEMBRANE PROTEIN-RELATED"/>
    <property type="match status" value="1"/>
</dbReference>
<dbReference type="PANTHER" id="PTHR21347:SF0">
    <property type="entry name" value="LIPID SCRAMBLASE CLPTM1L"/>
    <property type="match status" value="1"/>
</dbReference>
<dbReference type="Pfam" id="PF05602">
    <property type="entry name" value="CLPTM1"/>
    <property type="match status" value="1"/>
</dbReference>
<reference key="1">
    <citation type="submission" date="2004-11" db="EMBL/GenBank/DDBJ databases">
        <authorList>
            <consortium name="The German cDNA consortium"/>
        </authorList>
    </citation>
    <scope>NUCLEOTIDE SEQUENCE [LARGE SCALE MRNA]</scope>
    <source>
        <tissue>Kidney</tissue>
    </source>
</reference>
<proteinExistence type="evidence at transcript level"/>
<keyword id="KW-0053">Apoptosis</keyword>
<keyword id="KW-0256">Endoplasmic reticulum</keyword>
<keyword id="KW-0325">Glycoprotein</keyword>
<keyword id="KW-0445">Lipid transport</keyword>
<keyword id="KW-0472">Membrane</keyword>
<keyword id="KW-1185">Reference proteome</keyword>
<keyword id="KW-0812">Transmembrane</keyword>
<keyword id="KW-1133">Transmembrane helix</keyword>
<keyword id="KW-0813">Transport</keyword>
<name>CLP1L_PONAB</name>
<accession>Q5R7B1</accession>
<sequence length="538" mass="62132">MWSGRSSFTSLVVGVFVVYVVHTCWVMYGIVYTRPCSGDANCIQPYLARRPKLQLSVYTTTRSHLGAENNIDLVLNVEDFDVESKFERTVNVSVPKKTRNNGTLYAYIFLHHAGVLPWHDGKQVHLVSPLTTYMVPKPEEINLLTGESDTQQIEAEKKPTSALDEPVSHWRPRLALNVMADNFVFDGSSLPADVHRYMKMIQLGKTVHYLPILFIDQLSNRVKDLMVINRSTTELPLTVSYDKVSLGRLRFWIHMQDAVYSLQQFGFSEKDADEVKGIFVDTNLYFLALTFFVAAFHLLFDFLAFKNDISFWKKKKSMIGMSTKAVLWRCFSTVVIFLFLLDEQTSLLVLVPAGVGAAIELWKVKKALKMTILWRGLMPEFELGTYSESERKTEEYDTQAMKYLSYLLYPLCVGGAVYSLLNIKYKSWYSWLINSFVNGVYAFGFLFMLPQLFVNYKLKSVAHLPWKAFTYKAFNTFIDDVFAFIITMPTSHRLACFRDDVVFLVYLYQRWLYPVDKRRVNEFGESYEEKAARAPHTD</sequence>
<comment type="function">
    <text evidence="1">Scramblase that mediates the translocation of glucosaminylphosphatidylinositol (alpha-D-GlcN-(1-6)-(1,2-diacyl-sn-glycero-3-phospho)-1D-myo-inositol, GlcN-PI) across the endoplasmic reticulum (ER) membrane, from the cytosolic leaflet to the luminal leaflet of the ER membrane, where it participates in the biosynthesis of glycosylphosphatidylinositol (GPI). GPI is a lipid glycoconjugate involved in post-translational modification of proteins. Can also translocate 1,2-diacyl-sn-glycero-3-phospho-(1D-myo-inositol) (phosphatidylinositol or PI), as well as several other phospholipids (1,2-diacyl-sn-glycero-3-phosphocholine, 1,2-diacyl-sn-glycero-3-phosphoethanolamine), and N-acetylglucosaminylphosphatidylinositol (GlcNAc-PI) in vitro.</text>
</comment>
<comment type="catalytic activity">
    <reaction evidence="1">
        <text>a 6-(alpha-D-glucosaminyl)-1-(1,2-diacyl-sn-glycero-3-phospho)-1D-myo-inositol(in) = a 6-(alpha-D-glucosaminyl)-1-(1,2-diacyl-sn-glycero-3-phospho)-1D-myo-inositol(out)</text>
        <dbReference type="Rhea" id="RHEA:71491"/>
        <dbReference type="ChEBI" id="CHEBI:57997"/>
    </reaction>
</comment>
<comment type="catalytic activity">
    <reaction evidence="1">
        <text>6-(alpha-D-glucosaminyl)-(1-octadecanoyl,2-(9Z)-octadecenoyl-sn-glycero-3-phospho)-1D-myo-inositol(in) = 6-(alpha-D-glucosaminyl)-(1-octadecanoyl,2-(9Z)-octadecenoyl-sn-glycero-3-phospho)-1D-myo-inositol(out)</text>
        <dbReference type="Rhea" id="RHEA:71495"/>
        <dbReference type="ChEBI" id="CHEBI:190691"/>
    </reaction>
</comment>
<comment type="catalytic activity">
    <reaction evidence="1">
        <text>a 1,2-diacyl-sn-glycero-3-phospho-(1D-myo-inositol)(in) = a 1,2-diacyl-sn-glycero-3-phospho-(1D-myo-inositol)(out)</text>
        <dbReference type="Rhea" id="RHEA:38691"/>
        <dbReference type="ChEBI" id="CHEBI:57880"/>
    </reaction>
</comment>
<comment type="catalytic activity">
    <reaction evidence="1">
        <text>a 1,2-diacyl-sn-glycero-3-phosphocholine(in) = a 1,2-diacyl-sn-glycero-3-phosphocholine(out)</text>
        <dbReference type="Rhea" id="RHEA:38571"/>
        <dbReference type="ChEBI" id="CHEBI:57643"/>
    </reaction>
</comment>
<comment type="catalytic activity">
    <reaction evidence="1">
        <text>a 1,2-diacyl-sn-glycero-3-phosphoethanolamine(in) = a 1,2-diacyl-sn-glycero-3-phosphoethanolamine(out)</text>
        <dbReference type="Rhea" id="RHEA:38895"/>
        <dbReference type="ChEBI" id="CHEBI:64612"/>
    </reaction>
</comment>
<comment type="subcellular location">
    <subcellularLocation>
        <location evidence="3">Endoplasmic reticulum membrane</location>
        <topology evidence="2">Multi-pass membrane protein</topology>
    </subcellularLocation>
</comment>
<comment type="similarity">
    <text evidence="3">Belongs to the CLPTM1 family.</text>
</comment>
<organism>
    <name type="scientific">Pongo abelii</name>
    <name type="common">Sumatran orangutan</name>
    <name type="synonym">Pongo pygmaeus abelii</name>
    <dbReference type="NCBI Taxonomy" id="9601"/>
    <lineage>
        <taxon>Eukaryota</taxon>
        <taxon>Metazoa</taxon>
        <taxon>Chordata</taxon>
        <taxon>Craniata</taxon>
        <taxon>Vertebrata</taxon>
        <taxon>Euteleostomi</taxon>
        <taxon>Mammalia</taxon>
        <taxon>Eutheria</taxon>
        <taxon>Euarchontoglires</taxon>
        <taxon>Primates</taxon>
        <taxon>Haplorrhini</taxon>
        <taxon>Catarrhini</taxon>
        <taxon>Hominidae</taxon>
        <taxon>Pongo</taxon>
    </lineage>
</organism>